<protein>
    <recommendedName>
        <fullName>Protein BUD31 homolog 3</fullName>
    </recommendedName>
    <alternativeName>
        <fullName>Protein G10 homolog 3</fullName>
    </alternativeName>
</protein>
<keyword id="KW-0539">Nucleus</keyword>
<keyword id="KW-1185">Reference proteome</keyword>
<evidence type="ECO:0000305" key="1"/>
<sequence>MPKIKTSGVKYPDGWELIEPTLSELHSKMREAENDPHDGRRKCEALWPIFKINHQRSRYLYDLYYNRKEISQELYEFCLDQGHADRNLIAKWKKQGYERLCCLRCIQTRDHNFATTCVCRVPKHLREEQVIECVHCGCKGCASGD</sequence>
<comment type="subcellular location">
    <subcellularLocation>
        <location evidence="1">Nucleus</location>
    </subcellularLocation>
</comment>
<comment type="similarity">
    <text evidence="1">Belongs to the BUD31 (G10) family.</text>
</comment>
<proteinExistence type="evidence at transcript level"/>
<organism>
    <name type="scientific">Oryza sativa subsp. japonica</name>
    <name type="common">Rice</name>
    <dbReference type="NCBI Taxonomy" id="39947"/>
    <lineage>
        <taxon>Eukaryota</taxon>
        <taxon>Viridiplantae</taxon>
        <taxon>Streptophyta</taxon>
        <taxon>Embryophyta</taxon>
        <taxon>Tracheophyta</taxon>
        <taxon>Spermatophyta</taxon>
        <taxon>Magnoliopsida</taxon>
        <taxon>Liliopsida</taxon>
        <taxon>Poales</taxon>
        <taxon>Poaceae</taxon>
        <taxon>BOP clade</taxon>
        <taxon>Oryzoideae</taxon>
        <taxon>Oryzeae</taxon>
        <taxon>Oryzinae</taxon>
        <taxon>Oryza</taxon>
        <taxon>Oryza sativa</taxon>
    </lineage>
</organism>
<dbReference type="EMBL" id="D12628">
    <property type="protein sequence ID" value="BAA02153.1"/>
    <property type="molecule type" value="mRNA"/>
</dbReference>
<dbReference type="EMBL" id="DP000011">
    <property type="protein sequence ID" value="ABA95809.2"/>
    <property type="molecule type" value="Genomic_DNA"/>
</dbReference>
<dbReference type="EMBL" id="AP008218">
    <property type="protein sequence ID" value="BAF29181.1"/>
    <property type="molecule type" value="Genomic_DNA"/>
</dbReference>
<dbReference type="EMBL" id="AP014968">
    <property type="protein sequence ID" value="BAT15907.1"/>
    <property type="molecule type" value="Genomic_DNA"/>
</dbReference>
<dbReference type="EMBL" id="AK103299">
    <property type="protein sequence ID" value="BAG96002.1"/>
    <property type="molecule type" value="mRNA"/>
</dbReference>
<dbReference type="PIR" id="T03790">
    <property type="entry name" value="T03790"/>
</dbReference>
<dbReference type="RefSeq" id="XP_015620231.1">
    <property type="nucleotide sequence ID" value="XM_015764745.1"/>
</dbReference>
<dbReference type="RefSeq" id="XP_015620232.1">
    <property type="nucleotide sequence ID" value="XM_015764746.1"/>
</dbReference>
<dbReference type="SMR" id="P35682"/>
<dbReference type="FunCoup" id="P35682">
    <property type="interactions" value="2434"/>
</dbReference>
<dbReference type="STRING" id="39947.P35682"/>
<dbReference type="PaxDb" id="39947-P35682"/>
<dbReference type="EnsemblPlants" id="Os12t0149800-01">
    <property type="protein sequence ID" value="Os12t0149800-01"/>
    <property type="gene ID" value="Os12g0149800"/>
</dbReference>
<dbReference type="Gramene" id="Os12t0149800-01">
    <property type="protein sequence ID" value="Os12t0149800-01"/>
    <property type="gene ID" value="Os12g0149800"/>
</dbReference>
<dbReference type="KEGG" id="dosa:Os12g0149800"/>
<dbReference type="eggNOG" id="KOG3404">
    <property type="taxonomic scope" value="Eukaryota"/>
</dbReference>
<dbReference type="HOGENOM" id="CLU_087132_1_1_1"/>
<dbReference type="InParanoid" id="P35682"/>
<dbReference type="OMA" id="QWEVFQI"/>
<dbReference type="OrthoDB" id="277109at2759"/>
<dbReference type="Proteomes" id="UP000000763">
    <property type="component" value="Chromosome 12"/>
</dbReference>
<dbReference type="Proteomes" id="UP000059680">
    <property type="component" value="Chromosome 12"/>
</dbReference>
<dbReference type="GO" id="GO:0005681">
    <property type="term" value="C:spliceosomal complex"/>
    <property type="evidence" value="ECO:0000318"/>
    <property type="project" value="GO_Central"/>
</dbReference>
<dbReference type="GO" id="GO:0000398">
    <property type="term" value="P:mRNA splicing, via spliceosome"/>
    <property type="evidence" value="ECO:0000318"/>
    <property type="project" value="GO_Central"/>
</dbReference>
<dbReference type="InterPro" id="IPR001748">
    <property type="entry name" value="BUD31"/>
</dbReference>
<dbReference type="InterPro" id="IPR018230">
    <property type="entry name" value="BUD31/G10-rel_CS"/>
</dbReference>
<dbReference type="PANTHER" id="PTHR19411:SF1">
    <property type="entry name" value="PROTEIN BUD31 HOMOLOG 3"/>
    <property type="match status" value="1"/>
</dbReference>
<dbReference type="PANTHER" id="PTHR19411">
    <property type="entry name" value="PROTEIN BUD31-RELATED"/>
    <property type="match status" value="1"/>
</dbReference>
<dbReference type="Pfam" id="PF01125">
    <property type="entry name" value="BUD31"/>
    <property type="match status" value="1"/>
</dbReference>
<dbReference type="PRINTS" id="PR00322">
    <property type="entry name" value="G10"/>
</dbReference>
<dbReference type="PROSITE" id="PS00997">
    <property type="entry name" value="G10_1"/>
    <property type="match status" value="1"/>
</dbReference>
<dbReference type="PROSITE" id="PS00998">
    <property type="entry name" value="G10_2"/>
    <property type="match status" value="1"/>
</dbReference>
<accession>P35682</accession>
<accession>Q0IQ34</accession>
<accession>Q2QXN7</accession>
<name>BD31C_ORYSJ</name>
<reference key="1">
    <citation type="submission" date="1992-07" db="EMBL/GenBank/DDBJ databases">
        <title>Isolation and characterization of a rice cDNA homologous to the Xenopus maternal G10 protein gene.</title>
        <authorList>
            <person name="Kato A."/>
            <person name="Shimazaki T."/>
            <person name="Nishi R."/>
            <person name="Uchimiya H."/>
        </authorList>
    </citation>
    <scope>NUCLEOTIDE SEQUENCE [MRNA]</scope>
</reference>
<reference key="2">
    <citation type="journal article" date="2005" name="BMC Biol.">
        <title>The sequence of rice chromosomes 11 and 12, rich in disease resistance genes and recent gene duplications.</title>
        <authorList>
            <consortium name="The rice chromosomes 11 and 12 sequencing consortia"/>
        </authorList>
    </citation>
    <scope>NUCLEOTIDE SEQUENCE [LARGE SCALE GENOMIC DNA]</scope>
    <source>
        <strain>cv. Nipponbare</strain>
    </source>
</reference>
<reference key="3">
    <citation type="journal article" date="2005" name="Nature">
        <title>The map-based sequence of the rice genome.</title>
        <authorList>
            <consortium name="International rice genome sequencing project (IRGSP)"/>
        </authorList>
    </citation>
    <scope>NUCLEOTIDE SEQUENCE [LARGE SCALE GENOMIC DNA]</scope>
    <source>
        <strain>cv. Nipponbare</strain>
    </source>
</reference>
<reference key="4">
    <citation type="journal article" date="2008" name="Nucleic Acids Res.">
        <title>The rice annotation project database (RAP-DB): 2008 update.</title>
        <authorList>
            <consortium name="The rice annotation project (RAP)"/>
        </authorList>
    </citation>
    <scope>GENOME REANNOTATION</scope>
    <source>
        <strain>cv. Nipponbare</strain>
    </source>
</reference>
<reference key="5">
    <citation type="journal article" date="2013" name="Rice">
        <title>Improvement of the Oryza sativa Nipponbare reference genome using next generation sequence and optical map data.</title>
        <authorList>
            <person name="Kawahara Y."/>
            <person name="de la Bastide M."/>
            <person name="Hamilton J.P."/>
            <person name="Kanamori H."/>
            <person name="McCombie W.R."/>
            <person name="Ouyang S."/>
            <person name="Schwartz D.C."/>
            <person name="Tanaka T."/>
            <person name="Wu J."/>
            <person name="Zhou S."/>
            <person name="Childs K.L."/>
            <person name="Davidson R.M."/>
            <person name="Lin H."/>
            <person name="Quesada-Ocampo L."/>
            <person name="Vaillancourt B."/>
            <person name="Sakai H."/>
            <person name="Lee S.S."/>
            <person name="Kim J."/>
            <person name="Numa H."/>
            <person name="Itoh T."/>
            <person name="Buell C.R."/>
            <person name="Matsumoto T."/>
        </authorList>
    </citation>
    <scope>GENOME REANNOTATION</scope>
    <source>
        <strain>cv. Nipponbare</strain>
    </source>
</reference>
<reference key="6">
    <citation type="journal article" date="2003" name="Science">
        <title>Collection, mapping, and annotation of over 28,000 cDNA clones from japonica rice.</title>
        <authorList>
            <consortium name="The rice full-length cDNA consortium"/>
        </authorList>
    </citation>
    <scope>NUCLEOTIDE SEQUENCE [LARGE SCALE MRNA]</scope>
    <source>
        <strain>cv. Nipponbare</strain>
    </source>
</reference>
<feature type="chain" id="PRO_0000193899" description="Protein BUD31 homolog 3">
    <location>
        <begin position="1"/>
        <end position="145"/>
    </location>
</feature>
<feature type="sequence conflict" description="In Ref. 1; BAA02153." evidence="1" ref="1">
    <original>KYPDG</original>
    <variation>NIRW</variation>
    <location>
        <begin position="10"/>
        <end position="14"/>
    </location>
</feature>
<feature type="sequence conflict" description="In Ref. 1; BAA02153." evidence="1" ref="1">
    <original>L</original>
    <variation>M</variation>
    <location>
        <position position="46"/>
    </location>
</feature>
<feature type="sequence conflict" description="In Ref. 1; BAA02153." evidence="1" ref="1">
    <original>EQV</original>
    <variation>DS</variation>
    <location>
        <begin position="128"/>
        <end position="130"/>
    </location>
</feature>
<feature type="sequence conflict" description="In Ref. 1; BAA02153." evidence="1" ref="1">
    <original>D</original>
    <variation>G</variation>
    <location>
        <position position="145"/>
    </location>
</feature>
<gene>
    <name type="ordered locus">Os12g0149800</name>
    <name type="ordered locus">LOC_Os12g05410</name>
</gene>